<sequence>MDPTISSHDTESTPLNETGHPNCTPILTLSFLVLITTLVGLAGNTIVLWLLGFRMRRKAISVYILNLALADSFFLCCHFIDSLLRIIDFYGLYAHKLSKDILGNAAIIPYISGLSILSAISTERCLCVLWPIWYHCHRPRNMSAIICALIWVLSFLMGILDWFSGFLGETHHHLWKNVDFIITAFLIFLFMLLSGSSLALLLRILCGPRRKPLSRLYVTIALTVMVYLICGLPLGLYLFLLYWFGVHLHYPFCHIYQVTAVLSCVNSSANPIIYFLVGSFRQHRKHRSLKRVLKRALEDTPEEDEYTDSHLHKTTEISESRY</sequence>
<evidence type="ECO:0000250" key="1">
    <source>
        <dbReference type="UniProtKB" id="Q96LB2"/>
    </source>
</evidence>
<evidence type="ECO:0000255" key="2"/>
<evidence type="ECO:0000255" key="3">
    <source>
        <dbReference type="PROSITE-ProRule" id="PRU00521"/>
    </source>
</evidence>
<evidence type="ECO:0000269" key="4">
    <source>
    </source>
</evidence>
<evidence type="ECO:0000305" key="5"/>
<evidence type="ECO:0000312" key="6">
    <source>
        <dbReference type="EMBL" id="AAN64385.1"/>
    </source>
</evidence>
<evidence type="ECO:0000312" key="7">
    <source>
        <dbReference type="MGI" id="MGI:3033139"/>
    </source>
</evidence>
<gene>
    <name evidence="7" type="primary">Mrgprx1</name>
    <name evidence="6" type="synonym">Mrgc11</name>
    <name evidence="7" type="synonym">Mrgprc11</name>
</gene>
<dbReference type="EMBL" id="AY152435">
    <property type="protein sequence ID" value="AAN64385.1"/>
    <property type="molecule type" value="mRNA"/>
</dbReference>
<dbReference type="CCDS" id="CCDS21299.1"/>
<dbReference type="RefSeq" id="NP_997423.1">
    <property type="nucleotide sequence ID" value="NM_207540.3"/>
</dbReference>
<dbReference type="SMR" id="Q8CIP3"/>
<dbReference type="BioGRID" id="240113">
    <property type="interactions" value="1"/>
</dbReference>
<dbReference type="FunCoup" id="Q8CIP3">
    <property type="interactions" value="45"/>
</dbReference>
<dbReference type="STRING" id="10090.ENSMUSP00000091954"/>
<dbReference type="BindingDB" id="Q8CIP3"/>
<dbReference type="ChEMBL" id="CHEMBL3341576"/>
<dbReference type="GlyCosmos" id="Q8CIP3">
    <property type="glycosylation" value="1 site, No reported glycans"/>
</dbReference>
<dbReference type="GlyGen" id="Q8CIP3">
    <property type="glycosylation" value="1 site"/>
</dbReference>
<dbReference type="PaxDb" id="10090-ENSMUSP00000091954"/>
<dbReference type="DNASU" id="404242"/>
<dbReference type="Ensembl" id="ENSMUST00000094390.3">
    <property type="protein sequence ID" value="ENSMUSP00000091954.2"/>
    <property type="gene ID" value="ENSMUSG00000070552.3"/>
</dbReference>
<dbReference type="GeneID" id="404242"/>
<dbReference type="KEGG" id="mmu:404242"/>
<dbReference type="UCSC" id="uc009hal.1">
    <property type="organism name" value="mouse"/>
</dbReference>
<dbReference type="AGR" id="MGI:3033139"/>
<dbReference type="CTD" id="259249"/>
<dbReference type="MGI" id="MGI:3033139">
    <property type="gene designation" value="Mrgprx1"/>
</dbReference>
<dbReference type="VEuPathDB" id="HostDB:ENSMUSG00000070552"/>
<dbReference type="eggNOG" id="ENOG502RTWA">
    <property type="taxonomic scope" value="Eukaryota"/>
</dbReference>
<dbReference type="GeneTree" id="ENSGT01030000234639"/>
<dbReference type="HOGENOM" id="CLU_009579_4_1_1"/>
<dbReference type="InParanoid" id="Q8CIP3"/>
<dbReference type="OMA" id="DFIAIAW"/>
<dbReference type="OrthoDB" id="9631784at2759"/>
<dbReference type="PhylomeDB" id="Q8CIP3"/>
<dbReference type="TreeFam" id="TF336336"/>
<dbReference type="BioGRID-ORCS" id="404242">
    <property type="hits" value="1 hit in 76 CRISPR screens"/>
</dbReference>
<dbReference type="PRO" id="PR:Q8CIP3"/>
<dbReference type="Proteomes" id="UP000000589">
    <property type="component" value="Chromosome 7"/>
</dbReference>
<dbReference type="RNAct" id="Q8CIP3">
    <property type="molecule type" value="protein"/>
</dbReference>
<dbReference type="Bgee" id="ENSMUSG00000070552">
    <property type="expression patterns" value="Expressed in lip and 1 other cell type or tissue"/>
</dbReference>
<dbReference type="GO" id="GO:0005886">
    <property type="term" value="C:plasma membrane"/>
    <property type="evidence" value="ECO:0007669"/>
    <property type="project" value="UniProtKB-SubCell"/>
</dbReference>
<dbReference type="GO" id="GO:0004930">
    <property type="term" value="F:G protein-coupled receptor activity"/>
    <property type="evidence" value="ECO:0007669"/>
    <property type="project" value="UniProtKB-KW"/>
</dbReference>
<dbReference type="GO" id="GO:0007635">
    <property type="term" value="P:chemosensory behavior"/>
    <property type="evidence" value="ECO:0000314"/>
    <property type="project" value="MGI"/>
</dbReference>
<dbReference type="GO" id="GO:0002244">
    <property type="term" value="P:hematopoietic progenitor cell differentiation"/>
    <property type="evidence" value="ECO:0000316"/>
    <property type="project" value="MGI"/>
</dbReference>
<dbReference type="FunFam" id="1.20.1070.10:FF:000140">
    <property type="entry name" value="Mas-related G-protein coupled receptor member X2"/>
    <property type="match status" value="1"/>
</dbReference>
<dbReference type="Gene3D" id="1.20.1070.10">
    <property type="entry name" value="Rhodopsin 7-helix transmembrane proteins"/>
    <property type="match status" value="1"/>
</dbReference>
<dbReference type="InterPro" id="IPR000276">
    <property type="entry name" value="GPCR_Rhodpsn"/>
</dbReference>
<dbReference type="InterPro" id="IPR017452">
    <property type="entry name" value="GPCR_Rhodpsn_7TM"/>
</dbReference>
<dbReference type="InterPro" id="IPR026234">
    <property type="entry name" value="MRGPCRFAMILY"/>
</dbReference>
<dbReference type="PANTHER" id="PTHR11334">
    <property type="entry name" value="MAS-RELATED G-PROTEIN COUPLED RECEPTOR"/>
    <property type="match status" value="1"/>
</dbReference>
<dbReference type="PANTHER" id="PTHR11334:SF34">
    <property type="entry name" value="MAS-RELATED G-PROTEIN COUPLED RECEPTOR MEMBER X3"/>
    <property type="match status" value="1"/>
</dbReference>
<dbReference type="Pfam" id="PF00001">
    <property type="entry name" value="7tm_1"/>
    <property type="match status" value="1"/>
</dbReference>
<dbReference type="PRINTS" id="PR00237">
    <property type="entry name" value="GPCRRHODOPSN"/>
</dbReference>
<dbReference type="PRINTS" id="PR02108">
    <property type="entry name" value="MRGPCRFAMILY"/>
</dbReference>
<dbReference type="SUPFAM" id="SSF81321">
    <property type="entry name" value="Family A G protein-coupled receptor-like"/>
    <property type="match status" value="1"/>
</dbReference>
<dbReference type="PROSITE" id="PS00237">
    <property type="entry name" value="G_PROTEIN_RECEP_F1_1"/>
    <property type="match status" value="1"/>
</dbReference>
<dbReference type="PROSITE" id="PS50262">
    <property type="entry name" value="G_PROTEIN_RECEP_F1_2"/>
    <property type="match status" value="1"/>
</dbReference>
<comment type="function">
    <text evidence="1 4">Orphan receptor activated by neuropeptides terminating in Arg-Phe or Arg-Phe-amide. Mediates its action by association with G proteins that activate a phosphatidylinositol-calcium second messenger system. Its effect is mediated by G(q) and G(11) proteins. May regulate the function of nociceptive neurons by modulation of pain perception.</text>
</comment>
<comment type="subcellular location">
    <subcellularLocation>
        <location>Cell membrane</location>
        <topology evidence="5">Multi-pass membrane protein</topology>
    </subcellularLocation>
</comment>
<comment type="tissue specificity">
    <text evidence="4">Expressed in a subset of IB4-positive small diameter nociceptive dorsal root neurons.</text>
</comment>
<comment type="similarity">
    <text evidence="3">Belongs to the G-protein coupled receptor 1 family. Mas subfamily.</text>
</comment>
<name>MRGX1_MOUSE</name>
<accession>Q8CIP3</accession>
<reference evidence="5 6" key="1">
    <citation type="journal article" date="2002" name="Proc. Natl. Acad. Sci. U.S.A.">
        <title>Orphan G protein-coupled receptors MrgA1 and MrgC11 are distinctively activated by RF-amide-related peptides through the Galpha q/11 pathway.</title>
        <authorList>
            <person name="Han S.-K."/>
            <person name="Dong X."/>
            <person name="Hwang J.-I."/>
            <person name="Zylka M.J."/>
            <person name="Anderson D.J."/>
            <person name="Simon M.I."/>
        </authorList>
    </citation>
    <scope>NUCLEOTIDE SEQUENCE [MRNA]</scope>
    <scope>FUNCTION</scope>
    <scope>TISSUE SPECIFICITY</scope>
    <source>
        <strain evidence="6">C57BL/6J</strain>
    </source>
</reference>
<proteinExistence type="evidence at transcript level"/>
<organism>
    <name type="scientific">Mus musculus</name>
    <name type="common">Mouse</name>
    <dbReference type="NCBI Taxonomy" id="10090"/>
    <lineage>
        <taxon>Eukaryota</taxon>
        <taxon>Metazoa</taxon>
        <taxon>Chordata</taxon>
        <taxon>Craniata</taxon>
        <taxon>Vertebrata</taxon>
        <taxon>Euteleostomi</taxon>
        <taxon>Mammalia</taxon>
        <taxon>Eutheria</taxon>
        <taxon>Euarchontoglires</taxon>
        <taxon>Glires</taxon>
        <taxon>Rodentia</taxon>
        <taxon>Myomorpha</taxon>
        <taxon>Muroidea</taxon>
        <taxon>Muridae</taxon>
        <taxon>Murinae</taxon>
        <taxon>Mus</taxon>
        <taxon>Mus</taxon>
    </lineage>
</organism>
<protein>
    <recommendedName>
        <fullName>Mas-related G-protein coupled receptor member X1</fullName>
    </recommendedName>
    <alternativeName>
        <fullName>Mas-related G-protein coupled receptor member C11</fullName>
    </alternativeName>
    <alternativeName>
        <fullName>Sensory neuron-specific G-protein coupled receptor 1</fullName>
    </alternativeName>
</protein>
<feature type="chain" id="PRO_0000283731" description="Mas-related G-protein coupled receptor member X1">
    <location>
        <begin position="1"/>
        <end position="322"/>
    </location>
</feature>
<feature type="topological domain" description="Extracellular" evidence="2">
    <location>
        <begin position="1"/>
        <end position="30"/>
    </location>
</feature>
<feature type="transmembrane region" description="Helical; Name=1" evidence="2">
    <location>
        <begin position="31"/>
        <end position="51"/>
    </location>
</feature>
<feature type="topological domain" description="Cytoplasmic" evidence="2">
    <location>
        <begin position="52"/>
        <end position="59"/>
    </location>
</feature>
<feature type="transmembrane region" description="Helical; Name=2" evidence="2">
    <location>
        <begin position="60"/>
        <end position="80"/>
    </location>
</feature>
<feature type="topological domain" description="Extracellular" evidence="2">
    <location>
        <begin position="81"/>
        <end position="100"/>
    </location>
</feature>
<feature type="transmembrane region" description="Helical; Name=3" evidence="2">
    <location>
        <begin position="101"/>
        <end position="121"/>
    </location>
</feature>
<feature type="topological domain" description="Cytoplasmic" evidence="2">
    <location>
        <begin position="122"/>
        <end position="142"/>
    </location>
</feature>
<feature type="transmembrane region" description="Helical; Name=4" evidence="2">
    <location>
        <begin position="143"/>
        <end position="163"/>
    </location>
</feature>
<feature type="topological domain" description="Extracellular" evidence="2">
    <location>
        <begin position="164"/>
        <end position="179"/>
    </location>
</feature>
<feature type="transmembrane region" description="Helical; Name=5" evidence="2">
    <location>
        <begin position="180"/>
        <end position="200"/>
    </location>
</feature>
<feature type="topological domain" description="Cytoplasmic" evidence="2">
    <location>
        <begin position="201"/>
        <end position="223"/>
    </location>
</feature>
<feature type="transmembrane region" description="Helical; Name=6" evidence="2">
    <location>
        <begin position="224"/>
        <end position="244"/>
    </location>
</feature>
<feature type="topological domain" description="Extracellular" evidence="2">
    <location>
        <begin position="245"/>
        <end position="257"/>
    </location>
</feature>
<feature type="transmembrane region" description="Helical; Name=7" evidence="2">
    <location>
        <begin position="258"/>
        <end position="278"/>
    </location>
</feature>
<feature type="topological domain" description="Cytoplasmic" evidence="2">
    <location>
        <begin position="279"/>
        <end position="322"/>
    </location>
</feature>
<feature type="glycosylation site" description="N-linked (GlcNAc...) asparagine" evidence="2">
    <location>
        <position position="16"/>
    </location>
</feature>
<keyword id="KW-1003">Cell membrane</keyword>
<keyword id="KW-0297">G-protein coupled receptor</keyword>
<keyword id="KW-0325">Glycoprotein</keyword>
<keyword id="KW-0472">Membrane</keyword>
<keyword id="KW-0675">Receptor</keyword>
<keyword id="KW-1185">Reference proteome</keyword>
<keyword id="KW-0807">Transducer</keyword>
<keyword id="KW-0812">Transmembrane</keyword>
<keyword id="KW-1133">Transmembrane helix</keyword>